<reference key="1">
    <citation type="submission" date="2007-12" db="EMBL/GenBank/DDBJ databases">
        <title>Brucella suis ATCC 23445 whole genome shotgun sequencing project.</title>
        <authorList>
            <person name="Setubal J.C."/>
            <person name="Bowns C."/>
            <person name="Boyle S."/>
            <person name="Crasta O.R."/>
            <person name="Czar M.J."/>
            <person name="Dharmanolla C."/>
            <person name="Gillespie J.J."/>
            <person name="Kenyon R.W."/>
            <person name="Lu J."/>
            <person name="Mane S."/>
            <person name="Mohapatra S."/>
            <person name="Nagrani S."/>
            <person name="Purkayastha A."/>
            <person name="Rajasimha H.K."/>
            <person name="Shallom J.M."/>
            <person name="Shallom S."/>
            <person name="Shukla M."/>
            <person name="Snyder E.E."/>
            <person name="Sobral B.W."/>
            <person name="Wattam A.R."/>
            <person name="Will R."/>
            <person name="Williams K."/>
            <person name="Yoo H."/>
            <person name="Bruce D."/>
            <person name="Detter C."/>
            <person name="Munk C."/>
            <person name="Brettin T.S."/>
        </authorList>
    </citation>
    <scope>NUCLEOTIDE SEQUENCE [LARGE SCALE GENOMIC DNA]</scope>
    <source>
        <strain>ATCC 23445 / NCTC 10510</strain>
    </source>
</reference>
<name>DXS_BRUSI</name>
<evidence type="ECO:0000255" key="1">
    <source>
        <dbReference type="HAMAP-Rule" id="MF_00315"/>
    </source>
</evidence>
<protein>
    <recommendedName>
        <fullName evidence="1">1-deoxy-D-xylulose-5-phosphate synthase</fullName>
        <ecNumber evidence="1">2.2.1.7</ecNumber>
    </recommendedName>
    <alternativeName>
        <fullName evidence="1">1-deoxyxylulose-5-phosphate synthase</fullName>
        <shortName evidence="1">DXP synthase</shortName>
        <shortName evidence="1">DXPS</shortName>
    </alternativeName>
</protein>
<sequence length="643" mass="69182">MSRPSTPLLDKAPTPDRLRALPEQDLPQLAEELRTELIDAVSTTGGHLGAGLGVVELTVALHHVFNTPYDRIIWDVGHQAYPHKILTGRRDRIRTLRQAGGLSGFTKRAESEYDPFGAAHSSTSISAGLGMAVASELSGEKRNVIAVIGDGSMSAGMAYEAMNNAGALDARLIVILNDNDMSIAPPTGAMSAYLARLVSGRTYRSVREAAKQVAQKLPKFLQDKARKSEEYARAFFTGGTLFEELGFYYVGPIDGHNLDHLLPVLKNVRDTQKGPVLIHVVTQKGKGYAPAEAAADKYHGVNKFDVITGKQAKPPANAPSYTKIFGTSLIEEARHDDKIVAVTAAMPTGTGLDLFGEAFPKRVFDVGIAEQHAVTFAAGLASEGYKPFCAIYSTFLQRGYDQVVHDVSIQNLPVRFPIDRAGLVGADGPTHAGSFDTGFLAALPGFVVMAASDEAELRHMVRTAAEYDEGPISFRYPRGDGVGVDLPERGSVLEIGKGRIVREGTKVALLSFGTRLQECLAAAEELGATGLSTTVADARFAKPLDHDLIRRLAREHEVLVMVEEGAVGGFGSHVLQFLATDGLLDRGLKVRALTLPDIYQDHGKPDAMYAEAGLDRTGIVRTVFAALHRDELGHEALPTPFRA</sequence>
<proteinExistence type="inferred from homology"/>
<accession>B0CKC0</accession>
<feature type="chain" id="PRO_1000079084" description="1-deoxy-D-xylulose-5-phosphate synthase">
    <location>
        <begin position="1"/>
        <end position="643"/>
    </location>
</feature>
<feature type="binding site" evidence="1">
    <location>
        <position position="78"/>
    </location>
    <ligand>
        <name>thiamine diphosphate</name>
        <dbReference type="ChEBI" id="CHEBI:58937"/>
    </ligand>
</feature>
<feature type="binding site" evidence="1">
    <location>
        <begin position="119"/>
        <end position="121"/>
    </location>
    <ligand>
        <name>thiamine diphosphate</name>
        <dbReference type="ChEBI" id="CHEBI:58937"/>
    </ligand>
</feature>
<feature type="binding site" evidence="1">
    <location>
        <position position="150"/>
    </location>
    <ligand>
        <name>Mg(2+)</name>
        <dbReference type="ChEBI" id="CHEBI:18420"/>
    </ligand>
</feature>
<feature type="binding site" evidence="1">
    <location>
        <begin position="151"/>
        <end position="152"/>
    </location>
    <ligand>
        <name>thiamine diphosphate</name>
        <dbReference type="ChEBI" id="CHEBI:58937"/>
    </ligand>
</feature>
<feature type="binding site" evidence="1">
    <location>
        <position position="179"/>
    </location>
    <ligand>
        <name>Mg(2+)</name>
        <dbReference type="ChEBI" id="CHEBI:18420"/>
    </ligand>
</feature>
<feature type="binding site" evidence="1">
    <location>
        <position position="179"/>
    </location>
    <ligand>
        <name>thiamine diphosphate</name>
        <dbReference type="ChEBI" id="CHEBI:58937"/>
    </ligand>
</feature>
<feature type="binding site" evidence="1">
    <location>
        <position position="288"/>
    </location>
    <ligand>
        <name>thiamine diphosphate</name>
        <dbReference type="ChEBI" id="CHEBI:58937"/>
    </ligand>
</feature>
<feature type="binding site" evidence="1">
    <location>
        <position position="370"/>
    </location>
    <ligand>
        <name>thiamine diphosphate</name>
        <dbReference type="ChEBI" id="CHEBI:58937"/>
    </ligand>
</feature>
<dbReference type="EC" id="2.2.1.7" evidence="1"/>
<dbReference type="EMBL" id="CP000911">
    <property type="protein sequence ID" value="ABY37550.1"/>
    <property type="molecule type" value="Genomic_DNA"/>
</dbReference>
<dbReference type="RefSeq" id="WP_006072240.1">
    <property type="nucleotide sequence ID" value="NC_010169.1"/>
</dbReference>
<dbReference type="SMR" id="B0CKC0"/>
<dbReference type="KEGG" id="bmt:BSUIS_A0462"/>
<dbReference type="HOGENOM" id="CLU_009227_1_4_5"/>
<dbReference type="UniPathway" id="UPA00064">
    <property type="reaction ID" value="UER00091"/>
</dbReference>
<dbReference type="Proteomes" id="UP000008545">
    <property type="component" value="Chromosome I"/>
</dbReference>
<dbReference type="GO" id="GO:0008661">
    <property type="term" value="F:1-deoxy-D-xylulose-5-phosphate synthase activity"/>
    <property type="evidence" value="ECO:0007669"/>
    <property type="project" value="UniProtKB-UniRule"/>
</dbReference>
<dbReference type="GO" id="GO:0000287">
    <property type="term" value="F:magnesium ion binding"/>
    <property type="evidence" value="ECO:0007669"/>
    <property type="project" value="UniProtKB-UniRule"/>
</dbReference>
<dbReference type="GO" id="GO:0030976">
    <property type="term" value="F:thiamine pyrophosphate binding"/>
    <property type="evidence" value="ECO:0007669"/>
    <property type="project" value="UniProtKB-UniRule"/>
</dbReference>
<dbReference type="GO" id="GO:0052865">
    <property type="term" value="P:1-deoxy-D-xylulose 5-phosphate biosynthetic process"/>
    <property type="evidence" value="ECO:0007669"/>
    <property type="project" value="UniProtKB-UniPathway"/>
</dbReference>
<dbReference type="GO" id="GO:0019682">
    <property type="term" value="P:glyceraldehyde-3-phosphate metabolic process"/>
    <property type="evidence" value="ECO:0007669"/>
    <property type="project" value="UniProtKB-ARBA"/>
</dbReference>
<dbReference type="GO" id="GO:0016114">
    <property type="term" value="P:terpenoid biosynthetic process"/>
    <property type="evidence" value="ECO:0007669"/>
    <property type="project" value="UniProtKB-UniRule"/>
</dbReference>
<dbReference type="GO" id="GO:0009228">
    <property type="term" value="P:thiamine biosynthetic process"/>
    <property type="evidence" value="ECO:0007669"/>
    <property type="project" value="UniProtKB-UniRule"/>
</dbReference>
<dbReference type="CDD" id="cd02007">
    <property type="entry name" value="TPP_DXS"/>
    <property type="match status" value="1"/>
</dbReference>
<dbReference type="CDD" id="cd07033">
    <property type="entry name" value="TPP_PYR_DXS_TK_like"/>
    <property type="match status" value="1"/>
</dbReference>
<dbReference type="FunFam" id="3.40.50.920:FF:000002">
    <property type="entry name" value="1-deoxy-D-xylulose-5-phosphate synthase"/>
    <property type="match status" value="1"/>
</dbReference>
<dbReference type="FunFam" id="3.40.50.970:FF:000005">
    <property type="entry name" value="1-deoxy-D-xylulose-5-phosphate synthase"/>
    <property type="match status" value="1"/>
</dbReference>
<dbReference type="Gene3D" id="3.40.50.920">
    <property type="match status" value="1"/>
</dbReference>
<dbReference type="Gene3D" id="3.40.50.970">
    <property type="match status" value="2"/>
</dbReference>
<dbReference type="HAMAP" id="MF_00315">
    <property type="entry name" value="DXP_synth"/>
    <property type="match status" value="1"/>
</dbReference>
<dbReference type="InterPro" id="IPR005477">
    <property type="entry name" value="Dxylulose-5-P_synthase"/>
</dbReference>
<dbReference type="InterPro" id="IPR029061">
    <property type="entry name" value="THDP-binding"/>
</dbReference>
<dbReference type="InterPro" id="IPR009014">
    <property type="entry name" value="Transketo_C/PFOR_II"/>
</dbReference>
<dbReference type="InterPro" id="IPR005475">
    <property type="entry name" value="Transketolase-like_Pyr-bd"/>
</dbReference>
<dbReference type="InterPro" id="IPR020826">
    <property type="entry name" value="Transketolase_BS"/>
</dbReference>
<dbReference type="InterPro" id="IPR033248">
    <property type="entry name" value="Transketolase_C"/>
</dbReference>
<dbReference type="InterPro" id="IPR049557">
    <property type="entry name" value="Transketolase_CS"/>
</dbReference>
<dbReference type="NCBIfam" id="TIGR00204">
    <property type="entry name" value="dxs"/>
    <property type="match status" value="1"/>
</dbReference>
<dbReference type="NCBIfam" id="NF003933">
    <property type="entry name" value="PRK05444.2-2"/>
    <property type="match status" value="1"/>
</dbReference>
<dbReference type="PANTHER" id="PTHR43322">
    <property type="entry name" value="1-D-DEOXYXYLULOSE 5-PHOSPHATE SYNTHASE-RELATED"/>
    <property type="match status" value="1"/>
</dbReference>
<dbReference type="PANTHER" id="PTHR43322:SF5">
    <property type="entry name" value="1-DEOXY-D-XYLULOSE-5-PHOSPHATE SYNTHASE, CHLOROPLASTIC"/>
    <property type="match status" value="1"/>
</dbReference>
<dbReference type="Pfam" id="PF13292">
    <property type="entry name" value="DXP_synthase_N"/>
    <property type="match status" value="1"/>
</dbReference>
<dbReference type="Pfam" id="PF02779">
    <property type="entry name" value="Transket_pyr"/>
    <property type="match status" value="1"/>
</dbReference>
<dbReference type="Pfam" id="PF02780">
    <property type="entry name" value="Transketolase_C"/>
    <property type="match status" value="1"/>
</dbReference>
<dbReference type="SMART" id="SM00861">
    <property type="entry name" value="Transket_pyr"/>
    <property type="match status" value="1"/>
</dbReference>
<dbReference type="SUPFAM" id="SSF52518">
    <property type="entry name" value="Thiamin diphosphate-binding fold (THDP-binding)"/>
    <property type="match status" value="2"/>
</dbReference>
<dbReference type="SUPFAM" id="SSF52922">
    <property type="entry name" value="TK C-terminal domain-like"/>
    <property type="match status" value="1"/>
</dbReference>
<dbReference type="PROSITE" id="PS00801">
    <property type="entry name" value="TRANSKETOLASE_1"/>
    <property type="match status" value="1"/>
</dbReference>
<dbReference type="PROSITE" id="PS00802">
    <property type="entry name" value="TRANSKETOLASE_2"/>
    <property type="match status" value="1"/>
</dbReference>
<organism>
    <name type="scientific">Brucella suis (strain ATCC 23445 / NCTC 10510)</name>
    <dbReference type="NCBI Taxonomy" id="470137"/>
    <lineage>
        <taxon>Bacteria</taxon>
        <taxon>Pseudomonadati</taxon>
        <taxon>Pseudomonadota</taxon>
        <taxon>Alphaproteobacteria</taxon>
        <taxon>Hyphomicrobiales</taxon>
        <taxon>Brucellaceae</taxon>
        <taxon>Brucella/Ochrobactrum group</taxon>
        <taxon>Brucella</taxon>
    </lineage>
</organism>
<gene>
    <name evidence="1" type="primary">dxs</name>
    <name type="ordered locus">BSUIS_A0462</name>
</gene>
<keyword id="KW-0414">Isoprene biosynthesis</keyword>
<keyword id="KW-0460">Magnesium</keyword>
<keyword id="KW-0479">Metal-binding</keyword>
<keyword id="KW-0784">Thiamine biosynthesis</keyword>
<keyword id="KW-0786">Thiamine pyrophosphate</keyword>
<keyword id="KW-0808">Transferase</keyword>
<comment type="function">
    <text evidence="1">Catalyzes the acyloin condensation reaction between C atoms 2 and 3 of pyruvate and glyceraldehyde 3-phosphate to yield 1-deoxy-D-xylulose-5-phosphate (DXP).</text>
</comment>
<comment type="catalytic activity">
    <reaction evidence="1">
        <text>D-glyceraldehyde 3-phosphate + pyruvate + H(+) = 1-deoxy-D-xylulose 5-phosphate + CO2</text>
        <dbReference type="Rhea" id="RHEA:12605"/>
        <dbReference type="ChEBI" id="CHEBI:15361"/>
        <dbReference type="ChEBI" id="CHEBI:15378"/>
        <dbReference type="ChEBI" id="CHEBI:16526"/>
        <dbReference type="ChEBI" id="CHEBI:57792"/>
        <dbReference type="ChEBI" id="CHEBI:59776"/>
        <dbReference type="EC" id="2.2.1.7"/>
    </reaction>
</comment>
<comment type="cofactor">
    <cofactor evidence="1">
        <name>Mg(2+)</name>
        <dbReference type="ChEBI" id="CHEBI:18420"/>
    </cofactor>
    <text evidence="1">Binds 1 Mg(2+) ion per subunit.</text>
</comment>
<comment type="cofactor">
    <cofactor evidence="1">
        <name>thiamine diphosphate</name>
        <dbReference type="ChEBI" id="CHEBI:58937"/>
    </cofactor>
    <text evidence="1">Binds 1 thiamine pyrophosphate per subunit.</text>
</comment>
<comment type="pathway">
    <text evidence="1">Metabolic intermediate biosynthesis; 1-deoxy-D-xylulose 5-phosphate biosynthesis; 1-deoxy-D-xylulose 5-phosphate from D-glyceraldehyde 3-phosphate and pyruvate: step 1/1.</text>
</comment>
<comment type="subunit">
    <text evidence="1">Homodimer.</text>
</comment>
<comment type="similarity">
    <text evidence="1">Belongs to the transketolase family. DXPS subfamily.</text>
</comment>